<reference key="1">
    <citation type="journal article" date="2007" name="Anim. Genet.">
        <title>Mutations within the FGF5 gene are associated with hair length in cats.</title>
        <authorList>
            <person name="Drogemuller C."/>
            <person name="Rufenacht S."/>
            <person name="Wichert B."/>
            <person name="Leeb T."/>
        </authorList>
    </citation>
    <scope>NUCLEOTIDE SEQUENCE [GENOMIC DNA / MRNA] (ISOFORMS 1 AND 2)</scope>
    <scope>VARIANTS ASP-61; PRO-65 AND PRO-159</scope>
    <scope>POLYMORPHISM</scope>
    <scope>TISSUE SPECIFICITY</scope>
</reference>
<reference key="2">
    <citation type="journal article" date="2007" name="Genome Res.">
        <title>Initial sequence and comparative analysis of the cat genome.</title>
        <authorList>
            <person name="Pontius J.U."/>
            <person name="Mullikin J.C."/>
            <person name="Smith D.R."/>
            <person name="Lindblad-Toh K."/>
            <person name="Gnerre S."/>
            <person name="Clamp M."/>
            <person name="Chang J."/>
            <person name="Stephens R."/>
            <person name="Neelam B."/>
            <person name="Volfovsky N."/>
            <person name="Schaffer A.A."/>
            <person name="Agarwala R."/>
            <person name="Narfstrom K."/>
            <person name="Murphy W.J."/>
            <person name="Giger U."/>
            <person name="Roca A.L."/>
            <person name="Antunes A."/>
            <person name="Menotti-Raymond M."/>
            <person name="Yuhki N."/>
            <person name="Pecon-Slattery J."/>
            <person name="Johnson W.E."/>
            <person name="Bourque G."/>
            <person name="Tesler G."/>
            <person name="O'Brien S.J."/>
        </authorList>
    </citation>
    <scope>NUCLEOTIDE SEQUENCE [LARGE SCALE GENOMIC DNA]</scope>
    <source>
        <strain>Abyssinian</strain>
    </source>
</reference>
<reference key="3">
    <citation type="journal article" date="2007" name="J. Hered.">
        <title>Four independent mutations in the feline fibroblast growth factor 5 gene determine the long-haired phenotype in domestic cats.</title>
        <authorList>
            <person name="Kehler J.S."/>
            <person name="David V.A."/>
            <person name="Schaeffer A.A."/>
            <person name="Bajema K."/>
            <person name="Eizirik E."/>
            <person name="Ryugo D.K."/>
            <person name="Hannah S.S."/>
            <person name="O'Brien S.J."/>
            <person name="Menotti-Raymond M."/>
        </authorList>
    </citation>
    <scope>POLYMORPHISM</scope>
    <scope>IDENTIFICATION OF VARIANTS SER-51; ASP-61; PRO-65; 136-ARG--GLY-270 DEL AND PRO-159</scope>
</reference>
<name>FGF5_FELCA</name>
<evidence type="ECO:0000250" key="1">
    <source>
        <dbReference type="UniProtKB" id="P12034"/>
    </source>
</evidence>
<evidence type="ECO:0000250" key="2">
    <source>
        <dbReference type="UniProtKB" id="Q20FD0"/>
    </source>
</evidence>
<evidence type="ECO:0000255" key="3"/>
<evidence type="ECO:0000256" key="4">
    <source>
        <dbReference type="SAM" id="MobiDB-lite"/>
    </source>
</evidence>
<evidence type="ECO:0000269" key="5">
    <source>
    </source>
</evidence>
<evidence type="ECO:0000269" key="6">
    <source>
    </source>
</evidence>
<evidence type="ECO:0000305" key="7"/>
<accession>M3X9S6</accession>
<accession>A2AXN8</accession>
<accession>A2AXN9</accession>
<gene>
    <name type="primary">FGF5</name>
</gene>
<feature type="signal peptide" evidence="3">
    <location>
        <begin position="1"/>
        <end position="20"/>
    </location>
</feature>
<feature type="chain" id="PRO_5005140408" description="Fibroblast growth factor 5" evidence="3">
    <location>
        <begin position="21"/>
        <end position="270"/>
    </location>
</feature>
<feature type="region of interest" description="Disordered" evidence="4">
    <location>
        <begin position="26"/>
        <end position="83"/>
    </location>
</feature>
<feature type="region of interest" description="Disordered" evidence="4">
    <location>
        <begin position="236"/>
        <end position="257"/>
    </location>
</feature>
<feature type="compositionally biased region" description="Low complexity" evidence="4">
    <location>
        <begin position="43"/>
        <end position="68"/>
    </location>
</feature>
<feature type="compositionally biased region" description="Polar residues" evidence="4">
    <location>
        <begin position="69"/>
        <end position="83"/>
    </location>
</feature>
<feature type="glycosylation site" description="N-linked (GlcNAc...) asparagine" evidence="3">
    <location>
        <position position="112"/>
    </location>
</feature>
<feature type="splice variant" id="VSP_060955" description="In isoform 2.">
    <original>ILEI</original>
    <variation>QIYR</variation>
    <location>
        <begin position="122"/>
        <end position="125"/>
    </location>
</feature>
<feature type="splice variant" id="VSP_060956" description="In isoform 2.">
    <location>
        <begin position="126"/>
        <end position="270"/>
    </location>
</feature>
<feature type="sequence variant" evidence="6">
    <original>R</original>
    <variation>S</variation>
    <location>
        <position position="51"/>
    </location>
</feature>
<feature type="sequence variant" evidence="5 6">
    <original>V</original>
    <variation>D</variation>
    <location>
        <position position="61"/>
    </location>
</feature>
<feature type="sequence variant" evidence="5 6">
    <original>H</original>
    <variation>P</variation>
    <location>
        <position position="65"/>
    </location>
</feature>
<feature type="sequence variant" description="Associated with long-haired phenotype." evidence="6">
    <location>
        <begin position="136"/>
        <end position="270"/>
    </location>
</feature>
<feature type="sequence variant" description="Associated with long-haired phenotype." evidence="5 6">
    <original>T</original>
    <variation>P</variation>
    <location>
        <position position="159"/>
    </location>
</feature>
<dbReference type="EMBL" id="AM412646">
    <property type="protein sequence ID" value="CAL81525.1"/>
    <property type="molecule type" value="Genomic_DNA"/>
</dbReference>
<dbReference type="EMBL" id="AM412646">
    <property type="protein sequence ID" value="CAL91036.1"/>
    <property type="molecule type" value="Genomic_DNA"/>
</dbReference>
<dbReference type="EMBL" id="AM412647">
    <property type="protein sequence ID" value="CAL81526.2"/>
    <property type="molecule type" value="mRNA"/>
</dbReference>
<dbReference type="EMBL" id="AM412648">
    <property type="protein sequence ID" value="CAL81527.2"/>
    <property type="molecule type" value="mRNA"/>
</dbReference>
<dbReference type="EMBL" id="AANG04001605">
    <property type="status" value="NOT_ANNOTATED_CDS"/>
    <property type="molecule type" value="Genomic_DNA"/>
</dbReference>
<dbReference type="RefSeq" id="NP_001108018.1">
    <property type="nucleotide sequence ID" value="NM_001114546.1"/>
</dbReference>
<dbReference type="RefSeq" id="XP_006931094.1">
    <property type="nucleotide sequence ID" value="XM_006931032.2"/>
</dbReference>
<dbReference type="SMR" id="M3X9S6"/>
<dbReference type="FunCoup" id="M3X9S6">
    <property type="interactions" value="79"/>
</dbReference>
<dbReference type="GlyCosmos" id="M3X9S6">
    <property type="glycosylation" value="1 site, No reported glycans"/>
</dbReference>
<dbReference type="PaxDb" id="9685-ENSFCAP00000023379"/>
<dbReference type="Ensembl" id="ENSFCAT00000030948.3">
    <molecule id="M3X9S6-1"/>
    <property type="protein sequence ID" value="ENSFCAP00000023379.1"/>
    <property type="gene ID" value="ENSFCAG00000029635.4"/>
</dbReference>
<dbReference type="GeneID" id="100136904"/>
<dbReference type="KEGG" id="fca:100136904"/>
<dbReference type="CTD" id="2250"/>
<dbReference type="eggNOG" id="KOG3885">
    <property type="taxonomic scope" value="Eukaryota"/>
</dbReference>
<dbReference type="GeneTree" id="ENSGT00940000158449"/>
<dbReference type="HOGENOM" id="CLU_081609_7_0_1"/>
<dbReference type="InParanoid" id="M3X9S6"/>
<dbReference type="OrthoDB" id="9947297at2759"/>
<dbReference type="Proteomes" id="UP000011712">
    <property type="component" value="Chromosome B1"/>
</dbReference>
<dbReference type="Bgee" id="ENSFCAG00000029635">
    <property type="expression patterns" value="Expressed in zone of skin and 3 other cell types or tissues"/>
</dbReference>
<dbReference type="GO" id="GO:0005737">
    <property type="term" value="C:cytoplasm"/>
    <property type="evidence" value="ECO:0000318"/>
    <property type="project" value="GO_Central"/>
</dbReference>
<dbReference type="GO" id="GO:0005615">
    <property type="term" value="C:extracellular space"/>
    <property type="evidence" value="ECO:0000318"/>
    <property type="project" value="GO_Central"/>
</dbReference>
<dbReference type="GO" id="GO:0005104">
    <property type="term" value="F:fibroblast growth factor receptor binding"/>
    <property type="evidence" value="ECO:0000318"/>
    <property type="project" value="GO_Central"/>
</dbReference>
<dbReference type="GO" id="GO:0008083">
    <property type="term" value="F:growth factor activity"/>
    <property type="evidence" value="ECO:0000318"/>
    <property type="project" value="GO_Central"/>
</dbReference>
<dbReference type="GO" id="GO:0008543">
    <property type="term" value="P:fibroblast growth factor receptor signaling pathway"/>
    <property type="evidence" value="ECO:0000318"/>
    <property type="project" value="GO_Central"/>
</dbReference>
<dbReference type="GO" id="GO:0022008">
    <property type="term" value="P:neurogenesis"/>
    <property type="evidence" value="ECO:0000318"/>
    <property type="project" value="GO_Central"/>
</dbReference>
<dbReference type="GO" id="GO:0051781">
    <property type="term" value="P:positive regulation of cell division"/>
    <property type="evidence" value="ECO:0007669"/>
    <property type="project" value="UniProtKB-KW"/>
</dbReference>
<dbReference type="GO" id="GO:0008284">
    <property type="term" value="P:positive regulation of cell population proliferation"/>
    <property type="evidence" value="ECO:0000318"/>
    <property type="project" value="GO_Central"/>
</dbReference>
<dbReference type="GO" id="GO:0043410">
    <property type="term" value="P:positive regulation of MAPK cascade"/>
    <property type="evidence" value="ECO:0000318"/>
    <property type="project" value="GO_Central"/>
</dbReference>
<dbReference type="GO" id="GO:0030334">
    <property type="term" value="P:regulation of cell migration"/>
    <property type="evidence" value="ECO:0000318"/>
    <property type="project" value="GO_Central"/>
</dbReference>
<dbReference type="CDD" id="cd23317">
    <property type="entry name" value="beta-trefoil_FGF5"/>
    <property type="match status" value="1"/>
</dbReference>
<dbReference type="FunFam" id="2.80.10.50:FF:000042">
    <property type="entry name" value="Fibroblast growth factor"/>
    <property type="match status" value="1"/>
</dbReference>
<dbReference type="Gene3D" id="2.80.10.50">
    <property type="match status" value="1"/>
</dbReference>
<dbReference type="InterPro" id="IPR002209">
    <property type="entry name" value="Fibroblast_GF_fam"/>
</dbReference>
<dbReference type="InterPro" id="IPR008996">
    <property type="entry name" value="IL1/FGF"/>
</dbReference>
<dbReference type="PANTHER" id="PTHR11486">
    <property type="entry name" value="FIBROBLAST GROWTH FACTOR"/>
    <property type="match status" value="1"/>
</dbReference>
<dbReference type="Pfam" id="PF00167">
    <property type="entry name" value="FGF"/>
    <property type="match status" value="1"/>
</dbReference>
<dbReference type="PRINTS" id="PR00263">
    <property type="entry name" value="HBGFFGF"/>
</dbReference>
<dbReference type="PRINTS" id="PR00262">
    <property type="entry name" value="IL1HBGF"/>
</dbReference>
<dbReference type="SMART" id="SM00442">
    <property type="entry name" value="FGF"/>
    <property type="match status" value="1"/>
</dbReference>
<dbReference type="SUPFAM" id="SSF50353">
    <property type="entry name" value="Cytokine"/>
    <property type="match status" value="1"/>
</dbReference>
<dbReference type="PROSITE" id="PS00247">
    <property type="entry name" value="HBGF_FGF"/>
    <property type="match status" value="1"/>
</dbReference>
<comment type="function">
    <text evidence="1 2">Plays an important role in the regulation of cell proliferation and cell differentiation. Required for normal regulation of the hair growth cycle. Functions as an inhibitor of hair elongation by promoting progression from anagen, the growth phase of the hair follicle, into catagen the apoptosis-induced regression phase (By similarity).</text>
</comment>
<comment type="subunit">
    <text evidence="1">Interacts with FGFR1 and FGFR2. Affinity between fibroblast growth factors (FGFs) and their receptors is increased by heparan sulfate glycosaminoglycans that function as coreceptors.</text>
</comment>
<comment type="subcellular location">
    <subcellularLocation>
        <location evidence="7">Secreted</location>
    </subcellularLocation>
</comment>
<comment type="alternative products">
    <event type="alternative splicing"/>
    <isoform>
        <id>M3X9S6-1</id>
        <name>1</name>
        <sequence type="displayed"/>
    </isoform>
    <isoform>
        <id>M3X9S6-2</id>
        <name>2</name>
        <sequence type="described" ref="VSP_060955 VSP_060956"/>
    </isoform>
</comment>
<comment type="tissue specificity">
    <molecule>Isoform 1</molecule>
    <text evidence="5">Expressed in skin.</text>
</comment>
<comment type="tissue specificity">
    <molecule>Isoform 2</molecule>
    <text evidence="5">Expressed in skin.</text>
</comment>
<comment type="polymorphism">
    <text evidence="5 6">Allelic variations in FGF5 may be associated with long-haired phenotype in domestic cats. The trait is autosomal recessive.</text>
</comment>
<comment type="similarity">
    <text evidence="7">Belongs to the heparin-binding growth factors family.</text>
</comment>
<organism>
    <name type="scientific">Felis catus</name>
    <name type="common">Cat</name>
    <name type="synonym">Felis silvestris catus</name>
    <dbReference type="NCBI Taxonomy" id="9685"/>
    <lineage>
        <taxon>Eukaryota</taxon>
        <taxon>Metazoa</taxon>
        <taxon>Chordata</taxon>
        <taxon>Craniata</taxon>
        <taxon>Vertebrata</taxon>
        <taxon>Euteleostomi</taxon>
        <taxon>Mammalia</taxon>
        <taxon>Eutheria</taxon>
        <taxon>Laurasiatheria</taxon>
        <taxon>Carnivora</taxon>
        <taxon>Feliformia</taxon>
        <taxon>Felidae</taxon>
        <taxon>Felinae</taxon>
        <taxon>Felis</taxon>
    </lineage>
</organism>
<proteinExistence type="evidence at transcript level"/>
<keyword id="KW-0025">Alternative splicing</keyword>
<keyword id="KW-0325">Glycoprotein</keyword>
<keyword id="KW-0339">Growth factor</keyword>
<keyword id="KW-0497">Mitogen</keyword>
<keyword id="KW-1185">Reference proteome</keyword>
<keyword id="KW-0964">Secreted</keyword>
<keyword id="KW-0732">Signal</keyword>
<sequence length="270" mass="29556">MSLSFLLLLFLSHLILSAWAHGEKHLAPKGQPGPAATGRNPAGASSSRSSRGTTSSSSSSVSSSHSASLGNQGSGLEQSSFQWSPSGRRTGSLYCRVGIGFHLQIYPDGKVNGSHEANMLSILEIFAVSQGIVGIRGVFSNKFLAMSKKGKLHASAKFTDDCKFRERFQENSYNTYASAIHRTEPAGREWYVALNKRGKAKRGCSPRVKPQHISTHFLPRFKQLEQPELSFTVTVPEKKKPPSPVKPKVPLSAPRKSPNTVKYRLKFRFG</sequence>
<protein>
    <recommendedName>
        <fullName>Fibroblast growth factor 5</fullName>
        <shortName>FGF-5</shortName>
    </recommendedName>
</protein>